<accession>Q9UUD6</accession>
<gene>
    <name type="primary">ubp11</name>
    <name type="ORF">SPBC19C2.04c</name>
</gene>
<sequence>MSTTPLSISRAKKYKTVFKGAAILTTFAALYIVTSPSTGKRLVKNASIKGLYNVSGNDCFLNCVLQSLASQESLLEILKLRCSSSTLYATLYELLQKLNSGPGNPITPGSFLNSLEIATNKKLVRSIQQDAQEFLQHLVETLELQKPHTYKWSKVLSFPVDSPFIGTMEQKVQCCQCLAISISYSTATSIQLCLPPEYSGNSNVSLLSLMEADREQHISDYKCDSCFKSSPKHSKTSCIRTVDWKNPPTILQIQLERTSYTCQGLTRNNVSISFPSKLILKNKHHYILRSLITHSGSVTYGHYLCYRLQDDIWWKANDSLITKSSLNEALSQTRSACLLFYEMESPLALD</sequence>
<dbReference type="EC" id="3.4.19.12"/>
<dbReference type="EMBL" id="CU329671">
    <property type="protein sequence ID" value="CAB52031.1"/>
    <property type="molecule type" value="Genomic_DNA"/>
</dbReference>
<dbReference type="PIR" id="T39795">
    <property type="entry name" value="T39795"/>
</dbReference>
<dbReference type="RefSeq" id="NP_595689.1">
    <property type="nucleotide sequence ID" value="NM_001021586.2"/>
</dbReference>
<dbReference type="SMR" id="Q9UUD6"/>
<dbReference type="BioGRID" id="277237">
    <property type="interactions" value="25"/>
</dbReference>
<dbReference type="STRING" id="284812.Q9UUD6"/>
<dbReference type="MEROPS" id="C19.A63"/>
<dbReference type="iPTMnet" id="Q9UUD6"/>
<dbReference type="PaxDb" id="4896-SPBC19C2.04c.1"/>
<dbReference type="EnsemblFungi" id="SPBC19C2.04c.1">
    <property type="protein sequence ID" value="SPBC19C2.04c.1:pep"/>
    <property type="gene ID" value="SPBC19C2.04c"/>
</dbReference>
<dbReference type="GeneID" id="2540714"/>
<dbReference type="KEGG" id="spo:2540714"/>
<dbReference type="PomBase" id="SPBC19C2.04c">
    <property type="gene designation" value="ubp11"/>
</dbReference>
<dbReference type="VEuPathDB" id="FungiDB:SPBC19C2.04c"/>
<dbReference type="eggNOG" id="KOG1867">
    <property type="taxonomic scope" value="Eukaryota"/>
</dbReference>
<dbReference type="HOGENOM" id="CLU_008279_11_3_1"/>
<dbReference type="InParanoid" id="Q9UUD6"/>
<dbReference type="OMA" id="QENWISQ"/>
<dbReference type="PhylomeDB" id="Q9UUD6"/>
<dbReference type="Reactome" id="R-SPO-5689880">
    <property type="pathway name" value="Ub-specific processing proteases"/>
</dbReference>
<dbReference type="Reactome" id="R-SPO-9648002">
    <property type="pathway name" value="RAS processing"/>
</dbReference>
<dbReference type="PRO" id="PR:Q9UUD6"/>
<dbReference type="Proteomes" id="UP000002485">
    <property type="component" value="Chromosome II"/>
</dbReference>
<dbReference type="GO" id="GO:0032473">
    <property type="term" value="C:cytoplasmic side of mitochondrial outer membrane"/>
    <property type="evidence" value="ECO:0000266"/>
    <property type="project" value="PomBase"/>
</dbReference>
<dbReference type="GO" id="GO:0005829">
    <property type="term" value="C:cytosol"/>
    <property type="evidence" value="ECO:0000318"/>
    <property type="project" value="GO_Central"/>
</dbReference>
<dbReference type="GO" id="GO:0005739">
    <property type="term" value="C:mitochondrion"/>
    <property type="evidence" value="ECO:0007005"/>
    <property type="project" value="PomBase"/>
</dbReference>
<dbReference type="GO" id="GO:0005634">
    <property type="term" value="C:nucleus"/>
    <property type="evidence" value="ECO:0000318"/>
    <property type="project" value="GO_Central"/>
</dbReference>
<dbReference type="GO" id="GO:0004843">
    <property type="term" value="F:cysteine-type deubiquitinase activity"/>
    <property type="evidence" value="ECO:0000318"/>
    <property type="project" value="GO_Central"/>
</dbReference>
<dbReference type="GO" id="GO:0140492">
    <property type="term" value="F:metal-dependent deubiquitinase activity"/>
    <property type="evidence" value="ECO:0007005"/>
    <property type="project" value="PomBase"/>
</dbReference>
<dbReference type="GO" id="GO:0016579">
    <property type="term" value="P:protein deubiquitination"/>
    <property type="evidence" value="ECO:0007669"/>
    <property type="project" value="InterPro"/>
</dbReference>
<dbReference type="GO" id="GO:0006508">
    <property type="term" value="P:proteolysis"/>
    <property type="evidence" value="ECO:0007669"/>
    <property type="project" value="UniProtKB-KW"/>
</dbReference>
<dbReference type="GO" id="GO:0031647">
    <property type="term" value="P:regulation of protein stability"/>
    <property type="evidence" value="ECO:0000318"/>
    <property type="project" value="GO_Central"/>
</dbReference>
<dbReference type="CDD" id="cd02257">
    <property type="entry name" value="Peptidase_C19"/>
    <property type="match status" value="1"/>
</dbReference>
<dbReference type="Gene3D" id="3.90.70.10">
    <property type="entry name" value="Cysteine proteinases"/>
    <property type="match status" value="1"/>
</dbReference>
<dbReference type="InterPro" id="IPR038765">
    <property type="entry name" value="Papain-like_cys_pep_sf"/>
</dbReference>
<dbReference type="InterPro" id="IPR050164">
    <property type="entry name" value="Peptidase_C19"/>
</dbReference>
<dbReference type="InterPro" id="IPR001394">
    <property type="entry name" value="Peptidase_C19_UCH"/>
</dbReference>
<dbReference type="InterPro" id="IPR018200">
    <property type="entry name" value="USP_CS"/>
</dbReference>
<dbReference type="InterPro" id="IPR028889">
    <property type="entry name" value="USP_dom"/>
</dbReference>
<dbReference type="PANTHER" id="PTHR24006">
    <property type="entry name" value="UBIQUITIN CARBOXYL-TERMINAL HYDROLASE"/>
    <property type="match status" value="1"/>
</dbReference>
<dbReference type="PANTHER" id="PTHR24006:SF827">
    <property type="entry name" value="UBIQUITIN CARBOXYL-TERMINAL HYDROLASE 34"/>
    <property type="match status" value="1"/>
</dbReference>
<dbReference type="Pfam" id="PF00443">
    <property type="entry name" value="UCH"/>
    <property type="match status" value="1"/>
</dbReference>
<dbReference type="SUPFAM" id="SSF54001">
    <property type="entry name" value="Cysteine proteinases"/>
    <property type="match status" value="1"/>
</dbReference>
<dbReference type="PROSITE" id="PS00973">
    <property type="entry name" value="USP_2"/>
    <property type="match status" value="1"/>
</dbReference>
<dbReference type="PROSITE" id="PS50235">
    <property type="entry name" value="USP_3"/>
    <property type="match status" value="1"/>
</dbReference>
<reference key="1">
    <citation type="journal article" date="2002" name="Nature">
        <title>The genome sequence of Schizosaccharomyces pombe.</title>
        <authorList>
            <person name="Wood V."/>
            <person name="Gwilliam R."/>
            <person name="Rajandream M.A."/>
            <person name="Lyne M.H."/>
            <person name="Lyne R."/>
            <person name="Stewart A."/>
            <person name="Sgouros J.G."/>
            <person name="Peat N."/>
            <person name="Hayles J."/>
            <person name="Baker S.G."/>
            <person name="Basham D."/>
            <person name="Bowman S."/>
            <person name="Brooks K."/>
            <person name="Brown D."/>
            <person name="Brown S."/>
            <person name="Chillingworth T."/>
            <person name="Churcher C.M."/>
            <person name="Collins M."/>
            <person name="Connor R."/>
            <person name="Cronin A."/>
            <person name="Davis P."/>
            <person name="Feltwell T."/>
            <person name="Fraser A."/>
            <person name="Gentles S."/>
            <person name="Goble A."/>
            <person name="Hamlin N."/>
            <person name="Harris D.E."/>
            <person name="Hidalgo J."/>
            <person name="Hodgson G."/>
            <person name="Holroyd S."/>
            <person name="Hornsby T."/>
            <person name="Howarth S."/>
            <person name="Huckle E.J."/>
            <person name="Hunt S."/>
            <person name="Jagels K."/>
            <person name="James K.D."/>
            <person name="Jones L."/>
            <person name="Jones M."/>
            <person name="Leather S."/>
            <person name="McDonald S."/>
            <person name="McLean J."/>
            <person name="Mooney P."/>
            <person name="Moule S."/>
            <person name="Mungall K.L."/>
            <person name="Murphy L.D."/>
            <person name="Niblett D."/>
            <person name="Odell C."/>
            <person name="Oliver K."/>
            <person name="O'Neil S."/>
            <person name="Pearson D."/>
            <person name="Quail M.A."/>
            <person name="Rabbinowitsch E."/>
            <person name="Rutherford K.M."/>
            <person name="Rutter S."/>
            <person name="Saunders D."/>
            <person name="Seeger K."/>
            <person name="Sharp S."/>
            <person name="Skelton J."/>
            <person name="Simmonds M.N."/>
            <person name="Squares R."/>
            <person name="Squares S."/>
            <person name="Stevens K."/>
            <person name="Taylor K."/>
            <person name="Taylor R.G."/>
            <person name="Tivey A."/>
            <person name="Walsh S.V."/>
            <person name="Warren T."/>
            <person name="Whitehead S."/>
            <person name="Woodward J.R."/>
            <person name="Volckaert G."/>
            <person name="Aert R."/>
            <person name="Robben J."/>
            <person name="Grymonprez B."/>
            <person name="Weltjens I."/>
            <person name="Vanstreels E."/>
            <person name="Rieger M."/>
            <person name="Schaefer M."/>
            <person name="Mueller-Auer S."/>
            <person name="Gabel C."/>
            <person name="Fuchs M."/>
            <person name="Duesterhoeft A."/>
            <person name="Fritzc C."/>
            <person name="Holzer E."/>
            <person name="Moestl D."/>
            <person name="Hilbert H."/>
            <person name="Borzym K."/>
            <person name="Langer I."/>
            <person name="Beck A."/>
            <person name="Lehrach H."/>
            <person name="Reinhardt R."/>
            <person name="Pohl T.M."/>
            <person name="Eger P."/>
            <person name="Zimmermann W."/>
            <person name="Wedler H."/>
            <person name="Wambutt R."/>
            <person name="Purnelle B."/>
            <person name="Goffeau A."/>
            <person name="Cadieu E."/>
            <person name="Dreano S."/>
            <person name="Gloux S."/>
            <person name="Lelaure V."/>
            <person name="Mottier S."/>
            <person name="Galibert F."/>
            <person name="Aves S.J."/>
            <person name="Xiang Z."/>
            <person name="Hunt C."/>
            <person name="Moore K."/>
            <person name="Hurst S.M."/>
            <person name="Lucas M."/>
            <person name="Rochet M."/>
            <person name="Gaillardin C."/>
            <person name="Tallada V.A."/>
            <person name="Garzon A."/>
            <person name="Thode G."/>
            <person name="Daga R.R."/>
            <person name="Cruzado L."/>
            <person name="Jimenez J."/>
            <person name="Sanchez M."/>
            <person name="del Rey F."/>
            <person name="Benito J."/>
            <person name="Dominguez A."/>
            <person name="Revuelta J.L."/>
            <person name="Moreno S."/>
            <person name="Armstrong J."/>
            <person name="Forsburg S.L."/>
            <person name="Cerutti L."/>
            <person name="Lowe T."/>
            <person name="McCombie W.R."/>
            <person name="Paulsen I."/>
            <person name="Potashkin J."/>
            <person name="Shpakovski G.V."/>
            <person name="Ussery D."/>
            <person name="Barrell B.G."/>
            <person name="Nurse P."/>
        </authorList>
    </citation>
    <scope>NUCLEOTIDE SEQUENCE [LARGE SCALE GENOMIC DNA]</scope>
    <source>
        <strain>972 / ATCC 24843</strain>
    </source>
</reference>
<organism>
    <name type="scientific">Schizosaccharomyces pombe (strain 972 / ATCC 24843)</name>
    <name type="common">Fission yeast</name>
    <dbReference type="NCBI Taxonomy" id="284812"/>
    <lineage>
        <taxon>Eukaryota</taxon>
        <taxon>Fungi</taxon>
        <taxon>Dikarya</taxon>
        <taxon>Ascomycota</taxon>
        <taxon>Taphrinomycotina</taxon>
        <taxon>Schizosaccharomycetes</taxon>
        <taxon>Schizosaccharomycetales</taxon>
        <taxon>Schizosaccharomycetaceae</taxon>
        <taxon>Schizosaccharomyces</taxon>
    </lineage>
</organism>
<keyword id="KW-0378">Hydrolase</keyword>
<keyword id="KW-0645">Protease</keyword>
<keyword id="KW-1185">Reference proteome</keyword>
<keyword id="KW-0788">Thiol protease</keyword>
<keyword id="KW-0833">Ubl conjugation pathway</keyword>
<evidence type="ECO:0000255" key="1">
    <source>
        <dbReference type="PROSITE-ProRule" id="PRU10093"/>
    </source>
</evidence>
<evidence type="ECO:0000305" key="2"/>
<name>UBP11_SCHPO</name>
<proteinExistence type="inferred from homology"/>
<protein>
    <recommendedName>
        <fullName>Ubiquitin carboxyl-terminal hydrolase 11</fullName>
        <ecNumber>3.4.19.12</ecNumber>
    </recommendedName>
    <alternativeName>
        <fullName>Deubiquitinating enzyme 11</fullName>
    </alternativeName>
    <alternativeName>
        <fullName>Ubiquitin thioesterase 11</fullName>
    </alternativeName>
    <alternativeName>
        <fullName>Ubiquitin-specific-processing protease 11</fullName>
    </alternativeName>
</protein>
<feature type="chain" id="PRO_0000080611" description="Ubiquitin carboxyl-terminal hydrolase 11">
    <location>
        <begin position="1"/>
        <end position="350"/>
    </location>
</feature>
<feature type="domain" description="USP">
    <location>
        <begin position="49"/>
        <end position="344"/>
    </location>
</feature>
<feature type="active site" description="Nucleophile" evidence="1">
    <location>
        <position position="59"/>
    </location>
</feature>
<feature type="active site" description="Proton acceptor" evidence="1">
    <location>
        <position position="302"/>
    </location>
</feature>
<comment type="catalytic activity">
    <reaction>
        <text>Thiol-dependent hydrolysis of ester, thioester, amide, peptide and isopeptide bonds formed by the C-terminal Gly of ubiquitin (a 76-residue protein attached to proteins as an intracellular targeting signal).</text>
        <dbReference type="EC" id="3.4.19.12"/>
    </reaction>
</comment>
<comment type="similarity">
    <text evidence="2">Belongs to the peptidase C19 family.</text>
</comment>